<gene>
    <name evidence="1" type="primary">lepA</name>
    <name type="ordered locus">A1I_03420</name>
</gene>
<proteinExistence type="inferred from homology"/>
<protein>
    <recommendedName>
        <fullName evidence="1">Elongation factor 4</fullName>
        <shortName evidence="1">EF-4</shortName>
        <ecNumber evidence="1">3.6.5.n1</ecNumber>
    </recommendedName>
    <alternativeName>
        <fullName evidence="1">Ribosomal back-translocase LepA</fullName>
    </alternativeName>
</protein>
<dbReference type="EC" id="3.6.5.n1" evidence="1"/>
<dbReference type="EMBL" id="CP000849">
    <property type="protein sequence ID" value="ABV79043.1"/>
    <property type="molecule type" value="Genomic_DNA"/>
</dbReference>
<dbReference type="RefSeq" id="WP_012151806.1">
    <property type="nucleotide sequence ID" value="NC_009883.1"/>
</dbReference>
<dbReference type="SMR" id="A8GW16"/>
<dbReference type="KEGG" id="rbo:A1I_03420"/>
<dbReference type="HOGENOM" id="CLU_009995_3_3_5"/>
<dbReference type="GO" id="GO:0005886">
    <property type="term" value="C:plasma membrane"/>
    <property type="evidence" value="ECO:0007669"/>
    <property type="project" value="UniProtKB-SubCell"/>
</dbReference>
<dbReference type="GO" id="GO:0005525">
    <property type="term" value="F:GTP binding"/>
    <property type="evidence" value="ECO:0007669"/>
    <property type="project" value="UniProtKB-UniRule"/>
</dbReference>
<dbReference type="GO" id="GO:0003924">
    <property type="term" value="F:GTPase activity"/>
    <property type="evidence" value="ECO:0007669"/>
    <property type="project" value="UniProtKB-UniRule"/>
</dbReference>
<dbReference type="GO" id="GO:0097216">
    <property type="term" value="F:guanosine tetraphosphate binding"/>
    <property type="evidence" value="ECO:0007669"/>
    <property type="project" value="UniProtKB-ARBA"/>
</dbReference>
<dbReference type="GO" id="GO:0043022">
    <property type="term" value="F:ribosome binding"/>
    <property type="evidence" value="ECO:0007669"/>
    <property type="project" value="UniProtKB-UniRule"/>
</dbReference>
<dbReference type="GO" id="GO:0003746">
    <property type="term" value="F:translation elongation factor activity"/>
    <property type="evidence" value="ECO:0007669"/>
    <property type="project" value="UniProtKB-UniRule"/>
</dbReference>
<dbReference type="GO" id="GO:0045727">
    <property type="term" value="P:positive regulation of translation"/>
    <property type="evidence" value="ECO:0007669"/>
    <property type="project" value="UniProtKB-UniRule"/>
</dbReference>
<dbReference type="CDD" id="cd03699">
    <property type="entry name" value="EF4_II"/>
    <property type="match status" value="1"/>
</dbReference>
<dbReference type="CDD" id="cd16260">
    <property type="entry name" value="EF4_III"/>
    <property type="match status" value="1"/>
</dbReference>
<dbReference type="CDD" id="cd01890">
    <property type="entry name" value="LepA"/>
    <property type="match status" value="1"/>
</dbReference>
<dbReference type="CDD" id="cd03709">
    <property type="entry name" value="lepA_C"/>
    <property type="match status" value="1"/>
</dbReference>
<dbReference type="FunFam" id="3.40.50.300:FF:000078">
    <property type="entry name" value="Elongation factor 4"/>
    <property type="match status" value="1"/>
</dbReference>
<dbReference type="FunFam" id="2.40.30.10:FF:000015">
    <property type="entry name" value="Translation factor GUF1, mitochondrial"/>
    <property type="match status" value="1"/>
</dbReference>
<dbReference type="FunFam" id="3.30.70.240:FF:000007">
    <property type="entry name" value="Translation factor GUF1, mitochondrial"/>
    <property type="match status" value="1"/>
</dbReference>
<dbReference type="FunFam" id="3.30.70.2570:FF:000001">
    <property type="entry name" value="Translation factor GUF1, mitochondrial"/>
    <property type="match status" value="1"/>
</dbReference>
<dbReference type="FunFam" id="3.30.70.870:FF:000004">
    <property type="entry name" value="Translation factor GUF1, mitochondrial"/>
    <property type="match status" value="1"/>
</dbReference>
<dbReference type="Gene3D" id="3.30.70.240">
    <property type="match status" value="1"/>
</dbReference>
<dbReference type="Gene3D" id="3.30.70.2570">
    <property type="entry name" value="Elongation factor 4, C-terminal domain"/>
    <property type="match status" value="1"/>
</dbReference>
<dbReference type="Gene3D" id="3.30.70.870">
    <property type="entry name" value="Elongation Factor G (Translational Gtpase), domain 3"/>
    <property type="match status" value="1"/>
</dbReference>
<dbReference type="Gene3D" id="3.40.50.300">
    <property type="entry name" value="P-loop containing nucleotide triphosphate hydrolases"/>
    <property type="match status" value="1"/>
</dbReference>
<dbReference type="Gene3D" id="2.40.30.10">
    <property type="entry name" value="Translation factors"/>
    <property type="match status" value="1"/>
</dbReference>
<dbReference type="HAMAP" id="MF_00071">
    <property type="entry name" value="LepA"/>
    <property type="match status" value="1"/>
</dbReference>
<dbReference type="InterPro" id="IPR006297">
    <property type="entry name" value="EF-4"/>
</dbReference>
<dbReference type="InterPro" id="IPR035647">
    <property type="entry name" value="EFG_III/V"/>
</dbReference>
<dbReference type="InterPro" id="IPR000640">
    <property type="entry name" value="EFG_V-like"/>
</dbReference>
<dbReference type="InterPro" id="IPR004161">
    <property type="entry name" value="EFTu-like_2"/>
</dbReference>
<dbReference type="InterPro" id="IPR031157">
    <property type="entry name" value="G_TR_CS"/>
</dbReference>
<dbReference type="InterPro" id="IPR038363">
    <property type="entry name" value="LepA_C_sf"/>
</dbReference>
<dbReference type="InterPro" id="IPR013842">
    <property type="entry name" value="LepA_CTD"/>
</dbReference>
<dbReference type="InterPro" id="IPR035654">
    <property type="entry name" value="LepA_IV"/>
</dbReference>
<dbReference type="InterPro" id="IPR027417">
    <property type="entry name" value="P-loop_NTPase"/>
</dbReference>
<dbReference type="InterPro" id="IPR005225">
    <property type="entry name" value="Small_GTP-bd"/>
</dbReference>
<dbReference type="InterPro" id="IPR000795">
    <property type="entry name" value="T_Tr_GTP-bd_dom"/>
</dbReference>
<dbReference type="NCBIfam" id="TIGR01393">
    <property type="entry name" value="lepA"/>
    <property type="match status" value="1"/>
</dbReference>
<dbReference type="NCBIfam" id="TIGR00231">
    <property type="entry name" value="small_GTP"/>
    <property type="match status" value="1"/>
</dbReference>
<dbReference type="PANTHER" id="PTHR43512:SF4">
    <property type="entry name" value="TRANSLATION FACTOR GUF1 HOMOLOG, CHLOROPLASTIC"/>
    <property type="match status" value="1"/>
</dbReference>
<dbReference type="PANTHER" id="PTHR43512">
    <property type="entry name" value="TRANSLATION FACTOR GUF1-RELATED"/>
    <property type="match status" value="1"/>
</dbReference>
<dbReference type="Pfam" id="PF00679">
    <property type="entry name" value="EFG_C"/>
    <property type="match status" value="1"/>
</dbReference>
<dbReference type="Pfam" id="PF00009">
    <property type="entry name" value="GTP_EFTU"/>
    <property type="match status" value="1"/>
</dbReference>
<dbReference type="Pfam" id="PF03144">
    <property type="entry name" value="GTP_EFTU_D2"/>
    <property type="match status" value="1"/>
</dbReference>
<dbReference type="Pfam" id="PF06421">
    <property type="entry name" value="LepA_C"/>
    <property type="match status" value="1"/>
</dbReference>
<dbReference type="PRINTS" id="PR00315">
    <property type="entry name" value="ELONGATNFCT"/>
</dbReference>
<dbReference type="SMART" id="SM00838">
    <property type="entry name" value="EFG_C"/>
    <property type="match status" value="1"/>
</dbReference>
<dbReference type="SUPFAM" id="SSF54980">
    <property type="entry name" value="EF-G C-terminal domain-like"/>
    <property type="match status" value="2"/>
</dbReference>
<dbReference type="SUPFAM" id="SSF52540">
    <property type="entry name" value="P-loop containing nucleoside triphosphate hydrolases"/>
    <property type="match status" value="1"/>
</dbReference>
<dbReference type="PROSITE" id="PS00301">
    <property type="entry name" value="G_TR_1"/>
    <property type="match status" value="1"/>
</dbReference>
<dbReference type="PROSITE" id="PS51722">
    <property type="entry name" value="G_TR_2"/>
    <property type="match status" value="1"/>
</dbReference>
<feature type="chain" id="PRO_1000032046" description="Elongation factor 4">
    <location>
        <begin position="1"/>
        <end position="600"/>
    </location>
</feature>
<feature type="domain" description="tr-type G">
    <location>
        <begin position="5"/>
        <end position="187"/>
    </location>
</feature>
<feature type="binding site" evidence="1">
    <location>
        <begin position="17"/>
        <end position="22"/>
    </location>
    <ligand>
        <name>GTP</name>
        <dbReference type="ChEBI" id="CHEBI:37565"/>
    </ligand>
</feature>
<feature type="binding site" evidence="1">
    <location>
        <begin position="134"/>
        <end position="137"/>
    </location>
    <ligand>
        <name>GTP</name>
        <dbReference type="ChEBI" id="CHEBI:37565"/>
    </ligand>
</feature>
<evidence type="ECO:0000255" key="1">
    <source>
        <dbReference type="HAMAP-Rule" id="MF_00071"/>
    </source>
</evidence>
<accession>A8GW16</accession>
<comment type="function">
    <text evidence="1">Required for accurate and efficient protein synthesis under certain stress conditions. May act as a fidelity factor of the translation reaction, by catalyzing a one-codon backward translocation of tRNAs on improperly translocated ribosomes. Back-translocation proceeds from a post-translocation (POST) complex to a pre-translocation (PRE) complex, thus giving elongation factor G a second chance to translocate the tRNAs correctly. Binds to ribosomes in a GTP-dependent manner.</text>
</comment>
<comment type="catalytic activity">
    <reaction evidence="1">
        <text>GTP + H2O = GDP + phosphate + H(+)</text>
        <dbReference type="Rhea" id="RHEA:19669"/>
        <dbReference type="ChEBI" id="CHEBI:15377"/>
        <dbReference type="ChEBI" id="CHEBI:15378"/>
        <dbReference type="ChEBI" id="CHEBI:37565"/>
        <dbReference type="ChEBI" id="CHEBI:43474"/>
        <dbReference type="ChEBI" id="CHEBI:58189"/>
        <dbReference type="EC" id="3.6.5.n1"/>
    </reaction>
</comment>
<comment type="subcellular location">
    <subcellularLocation>
        <location evidence="1">Cell inner membrane</location>
        <topology evidence="1">Peripheral membrane protein</topology>
        <orientation evidence="1">Cytoplasmic side</orientation>
    </subcellularLocation>
</comment>
<comment type="similarity">
    <text evidence="1">Belongs to the TRAFAC class translation factor GTPase superfamily. Classic translation factor GTPase family. LepA subfamily.</text>
</comment>
<keyword id="KW-0997">Cell inner membrane</keyword>
<keyword id="KW-1003">Cell membrane</keyword>
<keyword id="KW-0342">GTP-binding</keyword>
<keyword id="KW-0378">Hydrolase</keyword>
<keyword id="KW-0472">Membrane</keyword>
<keyword id="KW-0547">Nucleotide-binding</keyword>
<keyword id="KW-0648">Protein biosynthesis</keyword>
<name>LEPA_RICB8</name>
<sequence>MNNQKYIRNFSIIAHIDHGKSTLADRLIEYCGGLQAREMSQQVLDSMDIEKERGITIKAQTVRLVYKAKDGNTYYLNLMDTPGHVDFAYEVSRSLAACEGSLLVVDSTQGVEAQTLANVYQAIENDHEIVPVLNKIDLPASEPDQVKQQIEDIIGIDASEAVLISAKSGIGIDLVLEAIVNKLPPPKESSTDILKALLVDSWYDPYLGVVILVRVIDGSLRKNMKVKMMATNSVYTIENVGYFTPKKHISDVLHAGEIGFFTASIKQVADCKVGDTITDEKKPCKQALPGFKPNLPVVFCGLYPTDSSEFEHLKDSLAKLRLNDASFEYEMESSSALGVGFRCGFLGLLHLEIIQERLSREFDLDLITTAPSVVYKIHMREGEVLEIHNPADLPDLQKIDSMEEPWIKATIMVPDEFLGAVLSLCTEKRGIQLDHNYIANRAKVVYKLPLNEIVYDFYDRLKSCSKGYASFEWQMDTYEPSELVKLGILVNSEVVDALSTIVHRSRAEQRGRALCVRLKDLIPRQQIDIAIQASIGSRIIARETIKALRKDVLSKCYGGDITRKRKLLEKQKAGKKRMRQYGNIEIPQSAFIAALKIGDE</sequence>
<organism>
    <name type="scientific">Rickettsia bellii (strain OSU 85-389)</name>
    <dbReference type="NCBI Taxonomy" id="391896"/>
    <lineage>
        <taxon>Bacteria</taxon>
        <taxon>Pseudomonadati</taxon>
        <taxon>Pseudomonadota</taxon>
        <taxon>Alphaproteobacteria</taxon>
        <taxon>Rickettsiales</taxon>
        <taxon>Rickettsiaceae</taxon>
        <taxon>Rickettsieae</taxon>
        <taxon>Rickettsia</taxon>
        <taxon>belli group</taxon>
    </lineage>
</organism>
<reference key="1">
    <citation type="submission" date="2007-09" db="EMBL/GenBank/DDBJ databases">
        <title>Complete genome sequencing of Rickettsia bellii.</title>
        <authorList>
            <person name="Madan A."/>
            <person name="Lee H."/>
            <person name="Madan A."/>
            <person name="Yoon J.-G."/>
            <person name="Ryu G.-Y."/>
            <person name="Dasch G."/>
            <person name="Ereemeva M."/>
        </authorList>
    </citation>
    <scope>NUCLEOTIDE SEQUENCE [LARGE SCALE GENOMIC DNA]</scope>
    <source>
        <strain>OSU 85-389</strain>
    </source>
</reference>